<sequence>MSFNLRGAVLANVSGNTQDQLQETIVDAIQSGEEKMLPGLGVLFEVIWKNADENEKHEMLETLEQGLKK</sequence>
<name>SSPI_BACC7</name>
<comment type="subcellular location">
    <subcellularLocation>
        <location evidence="1">Spore core</location>
    </subcellularLocation>
</comment>
<comment type="induction">
    <text evidence="1">Expressed only in the forespore compartment of sporulating cells.</text>
</comment>
<comment type="similarity">
    <text evidence="1">Belongs to the SspI family.</text>
</comment>
<gene>
    <name evidence="1" type="primary">sspI</name>
    <name type="ordered locus">BCAH187_A4689</name>
</gene>
<organism>
    <name type="scientific">Bacillus cereus (strain AH187)</name>
    <dbReference type="NCBI Taxonomy" id="405534"/>
    <lineage>
        <taxon>Bacteria</taxon>
        <taxon>Bacillati</taxon>
        <taxon>Bacillota</taxon>
        <taxon>Bacilli</taxon>
        <taxon>Bacillales</taxon>
        <taxon>Bacillaceae</taxon>
        <taxon>Bacillus</taxon>
        <taxon>Bacillus cereus group</taxon>
    </lineage>
</organism>
<dbReference type="EMBL" id="CP001177">
    <property type="protein sequence ID" value="ACJ78338.1"/>
    <property type="molecule type" value="Genomic_DNA"/>
</dbReference>
<dbReference type="SMR" id="B7HRK4"/>
<dbReference type="KEGG" id="bcr:BCAH187_A4689"/>
<dbReference type="HOGENOM" id="CLU_188877_0_0_9"/>
<dbReference type="Proteomes" id="UP000002214">
    <property type="component" value="Chromosome"/>
</dbReference>
<dbReference type="GO" id="GO:0030436">
    <property type="term" value="P:asexual sporulation"/>
    <property type="evidence" value="ECO:0007669"/>
    <property type="project" value="UniProtKB-UniRule"/>
</dbReference>
<dbReference type="GO" id="GO:0030435">
    <property type="term" value="P:sporulation resulting in formation of a cellular spore"/>
    <property type="evidence" value="ECO:0007669"/>
    <property type="project" value="UniProtKB-KW"/>
</dbReference>
<dbReference type="HAMAP" id="MF_00669">
    <property type="entry name" value="SspI"/>
    <property type="match status" value="1"/>
</dbReference>
<dbReference type="InterPro" id="IPR017525">
    <property type="entry name" value="SspI"/>
</dbReference>
<dbReference type="NCBIfam" id="TIGR03092">
    <property type="entry name" value="SASP_sspI"/>
    <property type="match status" value="1"/>
</dbReference>
<dbReference type="Pfam" id="PF14098">
    <property type="entry name" value="SSPI"/>
    <property type="match status" value="1"/>
</dbReference>
<evidence type="ECO:0000255" key="1">
    <source>
        <dbReference type="HAMAP-Rule" id="MF_00669"/>
    </source>
</evidence>
<protein>
    <recommendedName>
        <fullName evidence="1">Small, acid-soluble spore protein I</fullName>
        <shortName evidence="1">SASP I</shortName>
    </recommendedName>
</protein>
<feature type="chain" id="PRO_1000131504" description="Small, acid-soluble spore protein I">
    <location>
        <begin position="1"/>
        <end position="69"/>
    </location>
</feature>
<proteinExistence type="inferred from homology"/>
<accession>B7HRK4</accession>
<reference key="1">
    <citation type="submission" date="2008-10" db="EMBL/GenBank/DDBJ databases">
        <title>Genome sequence of Bacillus cereus AH187.</title>
        <authorList>
            <person name="Dodson R.J."/>
            <person name="Durkin A.S."/>
            <person name="Rosovitz M.J."/>
            <person name="Rasko D.A."/>
            <person name="Kolsto A.B."/>
            <person name="Okstad O.A."/>
            <person name="Ravel J."/>
            <person name="Sutton G."/>
        </authorList>
    </citation>
    <scope>NUCLEOTIDE SEQUENCE [LARGE SCALE GENOMIC DNA]</scope>
    <source>
        <strain>AH187</strain>
    </source>
</reference>
<keyword id="KW-0749">Sporulation</keyword>